<accession>Q1CCW0</accession>
<accession>D1Q2K5</accession>
<gene>
    <name evidence="1" type="primary">rplR</name>
    <name type="ordered locus">YPN_3843</name>
    <name type="ORF">YP516_4366</name>
</gene>
<name>RL18_YERPN</name>
<proteinExistence type="inferred from homology"/>
<comment type="function">
    <text evidence="1">This is one of the proteins that bind and probably mediate the attachment of the 5S RNA into the large ribosomal subunit, where it forms part of the central protuberance.</text>
</comment>
<comment type="subunit">
    <text evidence="1">Part of the 50S ribosomal subunit; part of the 5S rRNA/L5/L18/L25 subcomplex. Contacts the 5S and 23S rRNAs.</text>
</comment>
<comment type="similarity">
    <text evidence="1">Belongs to the universal ribosomal protein uL18 family.</text>
</comment>
<sequence>MDKKAARIRRATRARRKLKELGATRLVVHRTPRHIYAQVIAPNGSEILVAASTVEKAINEQLKYAGNKDAAAAVGKTIAERALEKGITKVSFDRSGFQYHGRVQALADAAREAGLQF</sequence>
<evidence type="ECO:0000255" key="1">
    <source>
        <dbReference type="HAMAP-Rule" id="MF_01337"/>
    </source>
</evidence>
<evidence type="ECO:0000305" key="2"/>
<protein>
    <recommendedName>
        <fullName evidence="1">Large ribosomal subunit protein uL18</fullName>
    </recommendedName>
    <alternativeName>
        <fullName evidence="2">50S ribosomal protein L18</fullName>
    </alternativeName>
</protein>
<dbReference type="EMBL" id="CP000305">
    <property type="protein sequence ID" value="ABG20170.1"/>
    <property type="molecule type" value="Genomic_DNA"/>
</dbReference>
<dbReference type="EMBL" id="ACNQ01000019">
    <property type="protein sequence ID" value="EEO74758.1"/>
    <property type="molecule type" value="Genomic_DNA"/>
</dbReference>
<dbReference type="RefSeq" id="WP_002213336.1">
    <property type="nucleotide sequence ID" value="NZ_ACNQ01000019.1"/>
</dbReference>
<dbReference type="SMR" id="Q1CCW0"/>
<dbReference type="GeneID" id="97454247"/>
<dbReference type="KEGG" id="ypn:YPN_3843"/>
<dbReference type="HOGENOM" id="CLU_098841_0_1_6"/>
<dbReference type="Proteomes" id="UP000008936">
    <property type="component" value="Chromosome"/>
</dbReference>
<dbReference type="GO" id="GO:0022625">
    <property type="term" value="C:cytosolic large ribosomal subunit"/>
    <property type="evidence" value="ECO:0007669"/>
    <property type="project" value="TreeGrafter"/>
</dbReference>
<dbReference type="GO" id="GO:0008097">
    <property type="term" value="F:5S rRNA binding"/>
    <property type="evidence" value="ECO:0007669"/>
    <property type="project" value="TreeGrafter"/>
</dbReference>
<dbReference type="GO" id="GO:0003735">
    <property type="term" value="F:structural constituent of ribosome"/>
    <property type="evidence" value="ECO:0007669"/>
    <property type="project" value="InterPro"/>
</dbReference>
<dbReference type="GO" id="GO:0006412">
    <property type="term" value="P:translation"/>
    <property type="evidence" value="ECO:0007669"/>
    <property type="project" value="UniProtKB-UniRule"/>
</dbReference>
<dbReference type="CDD" id="cd00432">
    <property type="entry name" value="Ribosomal_L18_L5e"/>
    <property type="match status" value="1"/>
</dbReference>
<dbReference type="FunFam" id="3.30.420.100:FF:000001">
    <property type="entry name" value="50S ribosomal protein L18"/>
    <property type="match status" value="1"/>
</dbReference>
<dbReference type="Gene3D" id="3.30.420.100">
    <property type="match status" value="1"/>
</dbReference>
<dbReference type="HAMAP" id="MF_01337_B">
    <property type="entry name" value="Ribosomal_uL18_B"/>
    <property type="match status" value="1"/>
</dbReference>
<dbReference type="InterPro" id="IPR004389">
    <property type="entry name" value="Ribosomal_uL18_bac-type"/>
</dbReference>
<dbReference type="InterPro" id="IPR005484">
    <property type="entry name" value="Ribosomal_uL18_bac/euk"/>
</dbReference>
<dbReference type="NCBIfam" id="TIGR00060">
    <property type="entry name" value="L18_bact"/>
    <property type="match status" value="1"/>
</dbReference>
<dbReference type="PANTHER" id="PTHR12899">
    <property type="entry name" value="39S RIBOSOMAL PROTEIN L18, MITOCHONDRIAL"/>
    <property type="match status" value="1"/>
</dbReference>
<dbReference type="PANTHER" id="PTHR12899:SF3">
    <property type="entry name" value="LARGE RIBOSOMAL SUBUNIT PROTEIN UL18M"/>
    <property type="match status" value="1"/>
</dbReference>
<dbReference type="Pfam" id="PF00861">
    <property type="entry name" value="Ribosomal_L18p"/>
    <property type="match status" value="1"/>
</dbReference>
<dbReference type="SUPFAM" id="SSF53137">
    <property type="entry name" value="Translational machinery components"/>
    <property type="match status" value="1"/>
</dbReference>
<feature type="chain" id="PRO_1000053140" description="Large ribosomal subunit protein uL18">
    <location>
        <begin position="1"/>
        <end position="117"/>
    </location>
</feature>
<reference key="1">
    <citation type="journal article" date="2006" name="J. Bacteriol.">
        <title>Complete genome sequence of Yersinia pestis strains Antiqua and Nepal516: evidence of gene reduction in an emerging pathogen.</title>
        <authorList>
            <person name="Chain P.S.G."/>
            <person name="Hu P."/>
            <person name="Malfatti S.A."/>
            <person name="Radnedge L."/>
            <person name="Larimer F."/>
            <person name="Vergez L.M."/>
            <person name="Worsham P."/>
            <person name="Chu M.C."/>
            <person name="Andersen G.L."/>
        </authorList>
    </citation>
    <scope>NUCLEOTIDE SEQUENCE [LARGE SCALE GENOMIC DNA]</scope>
    <source>
        <strain>Nepal516</strain>
    </source>
</reference>
<reference key="2">
    <citation type="submission" date="2009-04" db="EMBL/GenBank/DDBJ databases">
        <title>Yersinia pestis Nepal516A whole genome shotgun sequencing project.</title>
        <authorList>
            <person name="Plunkett G. III"/>
            <person name="Anderson B.D."/>
            <person name="Baumler D.J."/>
            <person name="Burland V."/>
            <person name="Cabot E.L."/>
            <person name="Glasner J.D."/>
            <person name="Mau B."/>
            <person name="Neeno-Eckwall E."/>
            <person name="Perna N.T."/>
            <person name="Munk A.C."/>
            <person name="Tapia R."/>
            <person name="Green L.D."/>
            <person name="Rogers Y.C."/>
            <person name="Detter J.C."/>
            <person name="Bruce D.C."/>
            <person name="Brettin T.S."/>
        </authorList>
    </citation>
    <scope>NUCLEOTIDE SEQUENCE [LARGE SCALE GENOMIC DNA]</scope>
    <source>
        <strain>Nepal516</strain>
    </source>
</reference>
<organism>
    <name type="scientific">Yersinia pestis bv. Antiqua (strain Nepal516)</name>
    <dbReference type="NCBI Taxonomy" id="377628"/>
    <lineage>
        <taxon>Bacteria</taxon>
        <taxon>Pseudomonadati</taxon>
        <taxon>Pseudomonadota</taxon>
        <taxon>Gammaproteobacteria</taxon>
        <taxon>Enterobacterales</taxon>
        <taxon>Yersiniaceae</taxon>
        <taxon>Yersinia</taxon>
    </lineage>
</organism>
<keyword id="KW-0687">Ribonucleoprotein</keyword>
<keyword id="KW-0689">Ribosomal protein</keyword>
<keyword id="KW-0694">RNA-binding</keyword>
<keyword id="KW-0699">rRNA-binding</keyword>